<feature type="chain" id="PRO_0000263557" description="Small ribosomal subunit protein uS12">
    <location>
        <begin position="1"/>
        <end position="124"/>
    </location>
</feature>
<feature type="region of interest" description="Disordered" evidence="3">
    <location>
        <begin position="102"/>
        <end position="124"/>
    </location>
</feature>
<feature type="compositionally biased region" description="Basic residues" evidence="3">
    <location>
        <begin position="109"/>
        <end position="124"/>
    </location>
</feature>
<feature type="modified residue" description="3-methylthioaspartic acid" evidence="1">
    <location>
        <position position="89"/>
    </location>
</feature>
<evidence type="ECO:0000250" key="1"/>
<evidence type="ECO:0000255" key="2">
    <source>
        <dbReference type="HAMAP-Rule" id="MF_00403"/>
    </source>
</evidence>
<evidence type="ECO:0000256" key="3">
    <source>
        <dbReference type="SAM" id="MobiDB-lite"/>
    </source>
</evidence>
<evidence type="ECO:0000305" key="4"/>
<reference key="1">
    <citation type="submission" date="2006-03" db="EMBL/GenBank/DDBJ databases">
        <title>Complete genome sequence of Francisella tularensis LVS (Live Vaccine Strain).</title>
        <authorList>
            <person name="Chain P."/>
            <person name="Larimer F."/>
            <person name="Land M."/>
            <person name="Stilwagen S."/>
            <person name="Larsson P."/>
            <person name="Bearden S."/>
            <person name="Chu M."/>
            <person name="Oyston P."/>
            <person name="Forsman M."/>
            <person name="Andersson S."/>
            <person name="Lindler L."/>
            <person name="Titball R."/>
            <person name="Garcia E."/>
        </authorList>
    </citation>
    <scope>NUCLEOTIDE SEQUENCE [LARGE SCALE GENOMIC DNA]</scope>
    <source>
        <strain>LVS</strain>
    </source>
</reference>
<keyword id="KW-0488">Methylation</keyword>
<keyword id="KW-1185">Reference proteome</keyword>
<keyword id="KW-0687">Ribonucleoprotein</keyword>
<keyword id="KW-0689">Ribosomal protein</keyword>
<keyword id="KW-0694">RNA-binding</keyword>
<keyword id="KW-0699">rRNA-binding</keyword>
<keyword id="KW-0820">tRNA-binding</keyword>
<accession>Q2A5H4</accession>
<name>RS12_FRATH</name>
<gene>
    <name evidence="2" type="primary">rpsL</name>
    <name type="ordered locus">FTL_0232</name>
</gene>
<dbReference type="EMBL" id="AM233362">
    <property type="protein sequence ID" value="CAJ78673.1"/>
    <property type="molecule type" value="Genomic_DNA"/>
</dbReference>
<dbReference type="RefSeq" id="WP_003014323.1">
    <property type="nucleotide sequence ID" value="NZ_CP009694.1"/>
</dbReference>
<dbReference type="SMR" id="Q2A5H4"/>
<dbReference type="KEGG" id="ftl:FTL_0232"/>
<dbReference type="Proteomes" id="UP000001944">
    <property type="component" value="Chromosome"/>
</dbReference>
<dbReference type="GO" id="GO:0015935">
    <property type="term" value="C:small ribosomal subunit"/>
    <property type="evidence" value="ECO:0007669"/>
    <property type="project" value="InterPro"/>
</dbReference>
<dbReference type="GO" id="GO:0019843">
    <property type="term" value="F:rRNA binding"/>
    <property type="evidence" value="ECO:0007669"/>
    <property type="project" value="UniProtKB-UniRule"/>
</dbReference>
<dbReference type="GO" id="GO:0003735">
    <property type="term" value="F:structural constituent of ribosome"/>
    <property type="evidence" value="ECO:0007669"/>
    <property type="project" value="InterPro"/>
</dbReference>
<dbReference type="GO" id="GO:0000049">
    <property type="term" value="F:tRNA binding"/>
    <property type="evidence" value="ECO:0007669"/>
    <property type="project" value="UniProtKB-UniRule"/>
</dbReference>
<dbReference type="GO" id="GO:0006412">
    <property type="term" value="P:translation"/>
    <property type="evidence" value="ECO:0007669"/>
    <property type="project" value="UniProtKB-UniRule"/>
</dbReference>
<dbReference type="CDD" id="cd03368">
    <property type="entry name" value="Ribosomal_S12"/>
    <property type="match status" value="1"/>
</dbReference>
<dbReference type="FunFam" id="2.40.50.140:FF:000001">
    <property type="entry name" value="30S ribosomal protein S12"/>
    <property type="match status" value="1"/>
</dbReference>
<dbReference type="Gene3D" id="2.40.50.140">
    <property type="entry name" value="Nucleic acid-binding proteins"/>
    <property type="match status" value="1"/>
</dbReference>
<dbReference type="HAMAP" id="MF_00403_B">
    <property type="entry name" value="Ribosomal_uS12_B"/>
    <property type="match status" value="1"/>
</dbReference>
<dbReference type="InterPro" id="IPR012340">
    <property type="entry name" value="NA-bd_OB-fold"/>
</dbReference>
<dbReference type="InterPro" id="IPR006032">
    <property type="entry name" value="Ribosomal_uS12"/>
</dbReference>
<dbReference type="InterPro" id="IPR005679">
    <property type="entry name" value="Ribosomal_uS12_bac"/>
</dbReference>
<dbReference type="NCBIfam" id="TIGR00981">
    <property type="entry name" value="rpsL_bact"/>
    <property type="match status" value="1"/>
</dbReference>
<dbReference type="PANTHER" id="PTHR11652">
    <property type="entry name" value="30S RIBOSOMAL PROTEIN S12 FAMILY MEMBER"/>
    <property type="match status" value="1"/>
</dbReference>
<dbReference type="Pfam" id="PF00164">
    <property type="entry name" value="Ribosom_S12_S23"/>
    <property type="match status" value="1"/>
</dbReference>
<dbReference type="PIRSF" id="PIRSF002133">
    <property type="entry name" value="Ribosomal_S12/S23"/>
    <property type="match status" value="1"/>
</dbReference>
<dbReference type="PRINTS" id="PR01034">
    <property type="entry name" value="RIBOSOMALS12"/>
</dbReference>
<dbReference type="SUPFAM" id="SSF50249">
    <property type="entry name" value="Nucleic acid-binding proteins"/>
    <property type="match status" value="1"/>
</dbReference>
<dbReference type="PROSITE" id="PS00055">
    <property type="entry name" value="RIBOSOMAL_S12"/>
    <property type="match status" value="1"/>
</dbReference>
<protein>
    <recommendedName>
        <fullName evidence="2">Small ribosomal subunit protein uS12</fullName>
    </recommendedName>
    <alternativeName>
        <fullName evidence="4">30S ribosomal protein S12</fullName>
    </alternativeName>
</protein>
<sequence>MATINQLVNNPRKRSVVKSKVPALKACPQRRGVCTRVYTTTPKKPNSALRKVARVRLTSRFEVTSYIGGEGHNLQEHSVVLIRGGRVKDLPGVRYHIVRGALDTSGVNNRKHGRSKYGTKRPKS</sequence>
<proteinExistence type="inferred from homology"/>
<organism>
    <name type="scientific">Francisella tularensis subsp. holarctica (strain LVS)</name>
    <dbReference type="NCBI Taxonomy" id="376619"/>
    <lineage>
        <taxon>Bacteria</taxon>
        <taxon>Pseudomonadati</taxon>
        <taxon>Pseudomonadota</taxon>
        <taxon>Gammaproteobacteria</taxon>
        <taxon>Thiotrichales</taxon>
        <taxon>Francisellaceae</taxon>
        <taxon>Francisella</taxon>
    </lineage>
</organism>
<comment type="function">
    <text evidence="2">With S4 and S5 plays an important role in translational accuracy.</text>
</comment>
<comment type="function">
    <text evidence="2">Interacts with and stabilizes bases of the 16S rRNA that are involved in tRNA selection in the A site and with the mRNA backbone. Located at the interface of the 30S and 50S subunits, it traverses the body of the 30S subunit contacting proteins on the other side and probably holding the rRNA structure together. The combined cluster of proteins S8, S12 and S17 appears to hold together the shoulder and platform of the 30S subunit.</text>
</comment>
<comment type="subunit">
    <text evidence="2">Part of the 30S ribosomal subunit. Contacts proteins S8 and S17. May interact with IF1 in the 30S initiation complex.</text>
</comment>
<comment type="similarity">
    <text evidence="2">Belongs to the universal ribosomal protein uS12 family.</text>
</comment>